<keyword id="KW-0002">3D-structure</keyword>
<keyword id="KW-0025">Alternative splicing</keyword>
<keyword id="KW-0963">Cytoplasm</keyword>
<keyword id="KW-0206">Cytoskeleton</keyword>
<keyword id="KW-0217">Developmental protein</keyword>
<keyword id="KW-0221">Differentiation</keyword>
<keyword id="KW-0903">Direct protein sequencing</keyword>
<keyword id="KW-0440">LIM domain</keyword>
<keyword id="KW-0479">Metal-binding</keyword>
<keyword id="KW-0488">Methylation</keyword>
<keyword id="KW-0892">Osteogenesis</keyword>
<keyword id="KW-0597">Phosphoprotein</keyword>
<keyword id="KW-1267">Proteomics identification</keyword>
<keyword id="KW-1185">Reference proteome</keyword>
<keyword id="KW-0677">Repeat</keyword>
<keyword id="KW-0862">Zinc</keyword>
<comment type="function">
    <text evidence="1 6 8">May function as a scaffold on which the coordinated assembly of proteins can occur. May play a role as an adapter that, via its PDZ domain, localizes LIM-binding proteins to actin filaments of both skeletal muscle and nonmuscle tissues. Involved in both of the two fundamental mechanisms of bone formation, direct bone formation (e.g. embryonic flat bones mandible and cranium), and endochondral bone formation (e.g. embryonic long bone development). Plays a role during fracture repair. Involved in BMP6 signaling pathway (By similarity).</text>
</comment>
<comment type="subunit">
    <text evidence="1">Binds via its LIM zinc-binding 3 domain (LIM 3) to endocytic codes of INSR, but not with those of IGF1R, LDLR, TFRC, or EGFR. Interacts with various PKC isoforms through the LIM zinc-binding domains. Binds to RET in a phosphorylation-independent manner via its LIM zinc-binding domain 2 (LIM 2). Probably part of a complex with SHC and the RET dimer. Interacts with TPM2. Interacts with TBX4 and TBX5 (By similarity).</text>
</comment>
<comment type="interaction">
    <interactant intactId="EBI-350517">
        <id>Q9NR12</id>
    </interactant>
    <interactant intactId="EBI-11096309">
        <id>Q9NYB9-2</id>
        <label>ABI2</label>
    </interactant>
    <organismsDiffer>false</organismsDiffer>
    <experiments>3</experiments>
</comment>
<comment type="interaction">
    <interactant intactId="EBI-350517">
        <id>Q9NR12</id>
    </interactant>
    <interactant intactId="EBI-745689">
        <id>Q7L5A3</id>
        <label>ATOSB</label>
    </interactant>
    <organismsDiffer>false</organismsDiffer>
    <experiments>3</experiments>
</comment>
<comment type="interaction">
    <interactant intactId="EBI-350517">
        <id>Q9NR12</id>
    </interactant>
    <interactant intactId="EBI-747185">
        <id>O95817</id>
        <label>BAG3</label>
    </interactant>
    <organismsDiffer>false</organismsDiffer>
    <experiments>7</experiments>
</comment>
<comment type="interaction">
    <interactant intactId="EBI-350517">
        <id>Q9NR12</id>
    </interactant>
    <interactant intactId="EBI-744545">
        <id>Q8NEC5</id>
        <label>CATSPER1</label>
    </interactant>
    <organismsDiffer>false</organismsDiffer>
    <experiments>5</experiments>
</comment>
<comment type="interaction">
    <interactant intactId="EBI-350517">
        <id>Q9NR12</id>
    </interactant>
    <interactant intactId="EBI-351257">
        <id>P26196</id>
        <label>DDX6</label>
    </interactant>
    <organismsDiffer>false</organismsDiffer>
    <experiments>3</experiments>
</comment>
<comment type="interaction">
    <interactant intactId="EBI-350517">
        <id>Q9NR12</id>
    </interactant>
    <interactant intactId="EBI-2682727">
        <id>Q8NFT8</id>
        <label>DNER</label>
    </interactant>
    <organismsDiffer>false</organismsDiffer>
    <experiments>3</experiments>
</comment>
<comment type="interaction">
    <interactant intactId="EBI-350517">
        <id>Q9NR12</id>
    </interactant>
    <interactant intactId="EBI-744099">
        <id>Q9H0I2</id>
        <label>ENKD1</label>
    </interactant>
    <organismsDiffer>false</organismsDiffer>
    <experiments>6</experiments>
</comment>
<comment type="interaction">
    <interactant intactId="EBI-350517">
        <id>Q9NR12</id>
    </interactant>
    <interactant intactId="EBI-6658203">
        <id>Q86YD7</id>
        <label>FAM90A1</label>
    </interactant>
    <organismsDiffer>false</organismsDiffer>
    <experiments>3</experiments>
</comment>
<comment type="interaction">
    <interactant intactId="EBI-350517">
        <id>Q9NR12</id>
    </interactant>
    <interactant intactId="EBI-725515">
        <id>O43559</id>
        <label>FRS3</label>
    </interactant>
    <organismsDiffer>false</organismsDiffer>
    <experiments>3</experiments>
</comment>
<comment type="interaction">
    <interactant intactId="EBI-350517">
        <id>Q9NR12</id>
    </interactant>
    <interactant intactId="EBI-752049">
        <id>Q8NEG0</id>
        <label>GARIN6</label>
    </interactant>
    <organismsDiffer>false</organismsDiffer>
    <experiments>3</experiments>
</comment>
<comment type="interaction">
    <interactant intactId="EBI-350517">
        <id>Q9NR12</id>
    </interactant>
    <interactant intactId="EBI-744104">
        <id>P55040</id>
        <label>GEM</label>
    </interactant>
    <organismsDiffer>false</organismsDiffer>
    <experiments>5</experiments>
</comment>
<comment type="interaction">
    <interactant intactId="EBI-350517">
        <id>Q9NR12</id>
    </interactant>
    <interactant intactId="EBI-11959863">
        <id>Q9NWQ4-1</id>
        <label>GPATCH2L</label>
    </interactant>
    <organismsDiffer>false</organismsDiffer>
    <experiments>3</experiments>
</comment>
<comment type="interaction">
    <interactant intactId="EBI-350517">
        <id>Q9NR12</id>
    </interactant>
    <interactant intactId="EBI-750630">
        <id>Q9UBP5</id>
        <label>HEY2</label>
    </interactant>
    <organismsDiffer>false</organismsDiffer>
    <experiments>3</experiments>
</comment>
<comment type="interaction">
    <interactant intactId="EBI-350517">
        <id>Q9NR12</id>
    </interactant>
    <interactant intactId="EBI-352986">
        <id>P52597</id>
        <label>HNRNPF</label>
    </interactant>
    <organismsDiffer>false</organismsDiffer>
    <experiments>5</experiments>
</comment>
<comment type="interaction">
    <interactant intactId="EBI-350517">
        <id>Q9NR12</id>
    </interactant>
    <interactant intactId="EBI-7116203">
        <id>O75031</id>
        <label>HSF2BP</label>
    </interactant>
    <organismsDiffer>false</organismsDiffer>
    <experiments>3</experiments>
</comment>
<comment type="interaction">
    <interactant intactId="EBI-350517">
        <id>Q9NR12</id>
    </interactant>
    <interactant intactId="EBI-739361">
        <id>Q9UBY9</id>
        <label>HSPB7</label>
    </interactant>
    <organismsDiffer>false</organismsDiffer>
    <experiments>3</experiments>
</comment>
<comment type="interaction">
    <interactant intactId="EBI-350517">
        <id>Q9NR12</id>
    </interactant>
    <interactant intactId="EBI-17178971">
        <id>Q14005-2</id>
        <label>IL16</label>
    </interactant>
    <organismsDiffer>false</organismsDiffer>
    <experiments>3</experiments>
</comment>
<comment type="interaction">
    <interactant intactId="EBI-350517">
        <id>Q9NR12</id>
    </interactant>
    <interactant intactId="EBI-9512851">
        <id>A4QPB0</id>
        <label>IQGAP1</label>
    </interactant>
    <organismsDiffer>false</organismsDiffer>
    <experiments>3</experiments>
</comment>
<comment type="interaction">
    <interactant intactId="EBI-350517">
        <id>Q9NR12</id>
    </interactant>
    <interactant intactId="EBI-2556193">
        <id>Q63ZY3</id>
        <label>KANK2</label>
    </interactant>
    <organismsDiffer>false</organismsDiffer>
    <experiments>3</experiments>
</comment>
<comment type="interaction">
    <interactant intactId="EBI-350517">
        <id>Q9NR12</id>
    </interactant>
    <interactant intactId="EBI-726826">
        <id>Q8NFP7</id>
        <label>NUDT10</label>
    </interactant>
    <organismsDiffer>false</organismsDiffer>
    <experiments>3</experiments>
</comment>
<comment type="interaction">
    <interactant intactId="EBI-350517">
        <id>Q9NR12</id>
    </interactant>
    <interactant intactId="EBI-11960139">
        <id>Q7L8S5</id>
        <label>OTUD6A</label>
    </interactant>
    <organismsDiffer>false</organismsDiffer>
    <experiments>3</experiments>
</comment>
<comment type="interaction">
    <interactant intactId="EBI-350517">
        <id>Q9NR12</id>
    </interactant>
    <interactant intactId="EBI-3921217">
        <id>Q9HBI0</id>
        <label>PARVG</label>
    </interactant>
    <organismsDiffer>false</organismsDiffer>
    <experiments>3</experiments>
</comment>
<comment type="interaction">
    <interactant intactId="EBI-350517">
        <id>Q9NR12</id>
    </interactant>
    <interactant intactId="EBI-530034">
        <id>O43189</id>
        <label>PHF1</label>
    </interactant>
    <organismsDiffer>false</organismsDiffer>
    <experiments>4</experiments>
</comment>
<comment type="interaction">
    <interactant intactId="EBI-350517">
        <id>Q9NR12</id>
    </interactant>
    <interactant intactId="EBI-714158">
        <id>Q13526</id>
        <label>PIN1</label>
    </interactant>
    <organismsDiffer>false</organismsDiffer>
    <experiments>3</experiments>
</comment>
<comment type="interaction">
    <interactant intactId="EBI-350517">
        <id>Q9NR12</id>
    </interactant>
    <interactant intactId="EBI-12014286">
        <id>Q494U1-3</id>
        <label>PLEKHN1</label>
    </interactant>
    <organismsDiffer>false</organismsDiffer>
    <experiments>3</experiments>
</comment>
<comment type="interaction">
    <interactant intactId="EBI-350517">
        <id>Q9NR12</id>
    </interactant>
    <interactant intactId="EBI-12013954">
        <id>Q0VAM2-3</id>
        <label>RASGEF1B</label>
    </interactant>
    <organismsDiffer>false</organismsDiffer>
    <experiments>3</experiments>
</comment>
<comment type="interaction">
    <interactant intactId="EBI-350517">
        <id>Q9NR12</id>
    </interactant>
    <interactant intactId="EBI-366570">
        <id>Q9BUL9</id>
        <label>RPP25</label>
    </interactant>
    <organismsDiffer>false</organismsDiffer>
    <experiments>3</experiments>
</comment>
<comment type="interaction">
    <interactant intactId="EBI-350517">
        <id>Q9NR12</id>
    </interactant>
    <interactant intactId="EBI-748391">
        <id>Q9BWG6</id>
        <label>SCNM1</label>
    </interactant>
    <organismsDiffer>false</organismsDiffer>
    <experiments>3</experiments>
</comment>
<comment type="interaction">
    <interactant intactId="EBI-350517">
        <id>Q9NR12</id>
    </interactant>
    <interactant intactId="EBI-10269374">
        <id>Q8ND83</id>
        <label>SLAIN1</label>
    </interactant>
    <organismsDiffer>false</organismsDiffer>
    <experiments>3</experiments>
</comment>
<comment type="interaction">
    <interactant intactId="EBI-350517">
        <id>Q9NR12</id>
    </interactant>
    <interactant intactId="EBI-7413767">
        <id>Q9Y242</id>
        <label>TCF19</label>
    </interactant>
    <organismsDiffer>false</organismsDiffer>
    <experiments>3</experiments>
</comment>
<comment type="interaction">
    <interactant intactId="EBI-350517">
        <id>Q9NR12</id>
    </interactant>
    <interactant intactId="EBI-12076664">
        <id>O14787-2</id>
        <label>TNPO2</label>
    </interactant>
    <organismsDiffer>false</organismsDiffer>
    <experiments>3</experiments>
</comment>
<comment type="interaction">
    <interactant intactId="EBI-350517">
        <id>Q9NR12</id>
    </interactant>
    <interactant intactId="EBI-346882">
        <id>Q99816</id>
        <label>TSG101</label>
    </interactant>
    <organismsDiffer>false</organismsDiffer>
    <experiments>10</experiments>
</comment>
<comment type="interaction">
    <interactant intactId="EBI-350517">
        <id>Q9NR12</id>
    </interactant>
    <interactant intactId="EBI-10241197">
        <id>Q3SY00</id>
        <label>TSGA10IP</label>
    </interactant>
    <organismsDiffer>false</organismsDiffer>
    <experiments>3</experiments>
</comment>
<comment type="interaction">
    <interactant intactId="EBI-350517">
        <id>Q9NR12</id>
    </interactant>
    <interactant intactId="EBI-711226">
        <id>Q9NRR5</id>
        <label>UBQLN4</label>
    </interactant>
    <organismsDiffer>false</organismsDiffer>
    <experiments>2</experiments>
</comment>
<comment type="interaction">
    <interactant intactId="EBI-350517">
        <id>Q9NR12</id>
    </interactant>
    <interactant intactId="EBI-743923">
        <id>O00308</id>
        <label>WWP2</label>
    </interactant>
    <organismsDiffer>false</organismsDiffer>
    <experiments>6</experiments>
</comment>
<comment type="interaction">
    <interactant intactId="EBI-350517">
        <id>Q9NR12</id>
    </interactant>
    <interactant intactId="EBI-3957603">
        <id>P09022</id>
        <label>Hoxa1</label>
    </interactant>
    <organismsDiffer>true</organismsDiffer>
    <experiments>3</experiments>
</comment>
<comment type="subcellular location">
    <subcellularLocation>
        <location evidence="1">Cytoplasm</location>
    </subcellularLocation>
    <subcellularLocation>
        <location evidence="1">Cytoplasm</location>
        <location evidence="1">Cytoskeleton</location>
    </subcellularLocation>
    <text evidence="1">Colocalizes with RET to the cell periphery and in some cytoskeletal components. Colocalizes with TPM2 near the Z line in muscle. Colocalizes with TBX4 and TBX5 to actin filaments (By similarity).</text>
</comment>
<comment type="alternative products">
    <event type="alternative splicing"/>
    <isoform>
        <id>Q9NR12-1</id>
        <name>1</name>
        <name>LMP-1</name>
        <sequence type="displayed"/>
    </isoform>
    <isoform>
        <id>Q9NR12-2</id>
        <name>2</name>
        <name>LMP-2</name>
        <sequence type="described" ref="VSP_016509"/>
    </isoform>
    <isoform>
        <id>Q9NR12-3</id>
        <name>3</name>
        <name>LMP-3</name>
        <sequence type="described" ref="VSP_016510 VSP_016513"/>
    </isoform>
    <isoform>
        <id>Q9NR12-4</id>
        <name>4</name>
        <sequence type="described" ref="VSP_016511 VSP_016516"/>
    </isoform>
    <isoform>
        <id>Q9NR12-5</id>
        <name>5</name>
        <sequence type="described" ref="VSP_016514"/>
    </isoform>
    <isoform>
        <id>Q9NR12-6</id>
        <name>6</name>
        <sequence type="described" ref="VSP_016512 VSP_016515"/>
    </isoform>
</comment>
<comment type="tissue specificity">
    <text evidence="6">Isoform 1 and isoform 2 are expressed ubiquitously, however, isoform 2 predominates in skeletal muscle, isoform 1 is more abundant in lung, spleen, leukocytes and fetal liver.</text>
</comment>
<comment type="domain">
    <text evidence="1">The LIM zinc-binding 2 (LIM 2) domain interacts with TBX4.</text>
</comment>
<comment type="domain">
    <text evidence="1">The LIM zinc-binding 3 (LIM 3) domain provides the structural basis for recognition of tyrosine-containing tight turn structures. This domain is necessary and sufficient for interaction with TBX5 (By similarity).</text>
</comment>
<comment type="domain">
    <text>Anchored to cell periphery via its N-terminal PDZ domain.</text>
</comment>
<comment type="miscellaneous">
    <molecule>Isoform 2</molecule>
    <text evidence="11">Did not induce bone induction.</text>
</comment>
<comment type="miscellaneous">
    <molecule>Isoform 3</molecule>
    <text evidence="11">Same activity as isoform 1 in bone nodule induction.</text>
</comment>
<comment type="miscellaneous">
    <molecule>Isoform 5</molecule>
    <text evidence="11">May be produced at very low levels due to a premature stop codon in the mRNA, leading to nonsense-mediated mRNA decay.</text>
</comment>
<comment type="sequence caution" evidence="11">
    <conflict type="frameshift">
        <sequence resource="EMBL-CDS" id="AAC37565"/>
    </conflict>
</comment>
<evidence type="ECO:0000250" key="1"/>
<evidence type="ECO:0000255" key="2">
    <source>
        <dbReference type="PROSITE-ProRule" id="PRU00125"/>
    </source>
</evidence>
<evidence type="ECO:0000255" key="3">
    <source>
        <dbReference type="PROSITE-ProRule" id="PRU00143"/>
    </source>
</evidence>
<evidence type="ECO:0000256" key="4">
    <source>
        <dbReference type="SAM" id="MobiDB-lite"/>
    </source>
</evidence>
<evidence type="ECO:0000269" key="5">
    <source>
    </source>
</evidence>
<evidence type="ECO:0000269" key="6">
    <source>
    </source>
</evidence>
<evidence type="ECO:0000269" key="7">
    <source>
    </source>
</evidence>
<evidence type="ECO:0000269" key="8">
    <source>
    </source>
</evidence>
<evidence type="ECO:0000303" key="9">
    <source>
    </source>
</evidence>
<evidence type="ECO:0000303" key="10">
    <source>
    </source>
</evidence>
<evidence type="ECO:0000305" key="11"/>
<evidence type="ECO:0007744" key="12">
    <source>
    </source>
</evidence>
<evidence type="ECO:0007744" key="13">
    <source>
    </source>
</evidence>
<evidence type="ECO:0007744" key="14">
    <source>
    </source>
</evidence>
<evidence type="ECO:0007829" key="15">
    <source>
        <dbReference type="PDB" id="2Q3G"/>
    </source>
</evidence>
<sequence length="457" mass="49845">MDSFKVVLEGPAPWGFRLQGGKDFNVPLSISRLTPGGKAAQAGVAVGDWVLSIDGENAGSLTHIEAQNKIRACGERLSLGLSRAQPVQSKPQKASAPAADPPRYTFAPSVSLNKTARPFGAPPPADSAPQQNGQPLRPLVPDASKQRLMENTEDWRPRPGTGQSRSFRILAHLTGTEFMQDPDEEHLKKSSQVPRTEAPAPASSTPQEPWPGPTAPSPTSRPPWAVDPAFAERYAPDKTSTVLTRHSQPATPTPLQSRTSIVQAAAGGVPGGGSNNGKTPVCHQCHKVIRGRYLVALGHAYHPEEFVCSQCGKVLEEGGFFEEKGAIFCPPCYDVRYAPSCAKCKKKITGEIMHALKMTWHVHCFTCAACKTPIRNRAFYMEEGVPYCERDYEKMFGTKCHGCDFKIDAGDRFLEALGFSWHDTCFVCAICQINLEGKTFYSKKDRPLCKSHAFSHV</sequence>
<feature type="chain" id="PRO_0000075881" description="PDZ and LIM domain protein 7">
    <location>
        <begin position="1"/>
        <end position="457"/>
    </location>
</feature>
<feature type="domain" description="PDZ" evidence="3">
    <location>
        <begin position="1"/>
        <end position="85"/>
    </location>
</feature>
<feature type="domain" description="LIM zinc-binding 1" evidence="2">
    <location>
        <begin position="280"/>
        <end position="338"/>
    </location>
</feature>
<feature type="domain" description="LIM zinc-binding 2" evidence="2">
    <location>
        <begin position="339"/>
        <end position="398"/>
    </location>
</feature>
<feature type="domain" description="LIM zinc-binding 3" evidence="2">
    <location>
        <begin position="399"/>
        <end position="457"/>
    </location>
</feature>
<feature type="region of interest" description="Disordered" evidence="4">
    <location>
        <begin position="82"/>
        <end position="142"/>
    </location>
</feature>
<feature type="region of interest" description="Disordered" evidence="4">
    <location>
        <begin position="176"/>
        <end position="226"/>
    </location>
</feature>
<feature type="region of interest" description="Disordered" evidence="4">
    <location>
        <begin position="239"/>
        <end position="258"/>
    </location>
</feature>
<feature type="compositionally biased region" description="Pro residues" evidence="4">
    <location>
        <begin position="208"/>
        <end position="221"/>
    </location>
</feature>
<feature type="modified residue" description="Phosphoserine" evidence="13">
    <location>
        <position position="78"/>
    </location>
</feature>
<feature type="modified residue" description="Asymmetric dimethylarginine" evidence="14">
    <location>
        <position position="103"/>
    </location>
</feature>
<feature type="modified residue" description="Phosphoserine" evidence="13">
    <location>
        <position position="111"/>
    </location>
</feature>
<feature type="modified residue" description="Phosphoserine" evidence="12">
    <location>
        <position position="247"/>
    </location>
</feature>
<feature type="splice variant" id="VSP_016509" description="In isoform 2." evidence="9">
    <original>ASAPAADPPRYTFAPSVSLNKTARPFGAPPPADSAPQQNG</original>
    <variation>VQTPDK</variation>
    <location>
        <begin position="94"/>
        <end position="133"/>
    </location>
</feature>
<feature type="splice variant" id="VSP_016510" description="In isoform 3." evidence="9">
    <original>QPLRPLVPDASKQRLMENTE</original>
    <variation>CRPLTNSRSDRWSQMPASSG</variation>
    <location>
        <begin position="134"/>
        <end position="153"/>
    </location>
</feature>
<feature type="splice variant" id="VSP_016513" description="In isoform 3." evidence="9">
    <location>
        <begin position="154"/>
        <end position="457"/>
    </location>
</feature>
<feature type="splice variant" id="VSP_016511" description="In isoform 4." evidence="10">
    <original>SQVPRTEAPAPASSTPQEPWPGPTAPSPTSRPPWAVDPAFAERYAPDKTSTVLTRHSQPATPTPLQSRTSIVQAAAGGVPGGGSNNGKTPVCHQCHK</original>
    <variation>RPYRPQPYQPPALGCGPCVCRALCPGQNEHSADPAQPAGHAHAAAEPHLHCAGSCRRGARRGQQQRQDSRVSPVPQGHPGPLPGGAGPRVPPGGVCV</variation>
    <location>
        <begin position="191"/>
        <end position="287"/>
    </location>
</feature>
<feature type="splice variant" id="VSP_016512" description="In isoform 6." evidence="10">
    <original>SQVPRTEAPAPASSTPQEPWPGPTAPSPTSRP</original>
    <variation>REKYVLELQSPRYTRLRDWHHQRSAHVLNVQS</variation>
    <location>
        <begin position="191"/>
        <end position="222"/>
    </location>
</feature>
<feature type="splice variant" id="VSP_016514" description="In isoform 5." evidence="10">
    <location>
        <begin position="192"/>
        <end position="457"/>
    </location>
</feature>
<feature type="splice variant" id="VSP_016515" description="In isoform 6." evidence="10">
    <location>
        <begin position="223"/>
        <end position="457"/>
    </location>
</feature>
<feature type="splice variant" id="VSP_016516" description="In isoform 4." evidence="10">
    <location>
        <begin position="288"/>
        <end position="457"/>
    </location>
</feature>
<feature type="sequence variant" id="VAR_050168" description="In dbSNP:rs2306764.">
    <original>A</original>
    <variation>T</variation>
    <location>
        <position position="326"/>
    </location>
</feature>
<feature type="sequence variant" id="VAR_036193" description="In a breast cancer sample; somatic mutation." evidence="7">
    <original>K</original>
    <variation>N</variation>
    <location>
        <position position="450"/>
    </location>
</feature>
<feature type="mutagenesis site" description="Loss of binding to TPM2." evidence="5">
    <original>GF</original>
    <variation>AA</variation>
    <location>
        <begin position="15"/>
        <end position="16"/>
    </location>
</feature>
<feature type="mutagenesis site" description="Loss of binding to TPM2." evidence="5">
    <original>H</original>
    <variation>A</variation>
    <location>
        <position position="63"/>
    </location>
</feature>
<feature type="sequence conflict" description="In Ref. 4; BC067806." evidence="11" ref="4">
    <original>P</original>
    <variation>Q</variation>
    <location>
        <position position="138"/>
    </location>
</feature>
<feature type="strand" evidence="15">
    <location>
        <begin position="1"/>
        <end position="12"/>
    </location>
</feature>
<feature type="strand" evidence="15">
    <location>
        <begin position="16"/>
        <end position="21"/>
    </location>
</feature>
<feature type="helix" evidence="15">
    <location>
        <begin position="22"/>
        <end position="24"/>
    </location>
</feature>
<feature type="strand" evidence="15">
    <location>
        <begin position="26"/>
        <end position="33"/>
    </location>
</feature>
<feature type="helix" evidence="15">
    <location>
        <begin position="38"/>
        <end position="41"/>
    </location>
</feature>
<feature type="strand" evidence="15">
    <location>
        <begin position="49"/>
        <end position="53"/>
    </location>
</feature>
<feature type="helix" evidence="15">
    <location>
        <begin position="58"/>
        <end position="60"/>
    </location>
</feature>
<feature type="helix" evidence="15">
    <location>
        <begin position="63"/>
        <end position="71"/>
    </location>
</feature>
<feature type="strand" evidence="15">
    <location>
        <begin position="76"/>
        <end position="84"/>
    </location>
</feature>
<dbReference type="EMBL" id="L35240">
    <property type="protein sequence ID" value="AAC37565.1"/>
    <property type="status" value="ALT_FRAME"/>
    <property type="molecule type" value="Genomic_DNA"/>
</dbReference>
<dbReference type="EMBL" id="AF345904">
    <property type="protein sequence ID" value="AAK30567.1"/>
    <property type="molecule type" value="mRNA"/>
</dbReference>
<dbReference type="EMBL" id="AF345905">
    <property type="protein sequence ID" value="AAK30568.1"/>
    <property type="molecule type" value="mRNA"/>
</dbReference>
<dbReference type="EMBL" id="AF345906">
    <property type="protein sequence ID" value="AAK30569.1"/>
    <property type="molecule type" value="mRNA"/>
</dbReference>
<dbReference type="EMBL" id="AF265209">
    <property type="protein sequence ID" value="AAF76152.1"/>
    <property type="molecule type" value="mRNA"/>
</dbReference>
<dbReference type="EMBL" id="BC001093">
    <property type="protein sequence ID" value="AAH01093.1"/>
    <property type="molecule type" value="mRNA"/>
</dbReference>
<dbReference type="EMBL" id="BC014521">
    <property type="protein sequence ID" value="AAH14521.1"/>
    <property type="molecule type" value="mRNA"/>
</dbReference>
<dbReference type="EMBL" id="BC067806">
    <property type="status" value="NOT_ANNOTATED_CDS"/>
    <property type="molecule type" value="mRNA"/>
</dbReference>
<dbReference type="EMBL" id="BC084575">
    <property type="protein sequence ID" value="AAH84575.1"/>
    <property type="molecule type" value="mRNA"/>
</dbReference>
<dbReference type="CCDS" id="CCDS4422.1">
    <molecule id="Q9NR12-1"/>
</dbReference>
<dbReference type="CCDS" id="CCDS4423.1">
    <molecule id="Q9NR12-2"/>
</dbReference>
<dbReference type="CCDS" id="CCDS4424.1">
    <molecule id="Q9NR12-6"/>
</dbReference>
<dbReference type="PIR" id="A55050">
    <property type="entry name" value="A55050"/>
</dbReference>
<dbReference type="RefSeq" id="NP_005442.2">
    <molecule id="Q9NR12-1"/>
    <property type="nucleotide sequence ID" value="NM_005451.4"/>
</dbReference>
<dbReference type="RefSeq" id="NP_976227.1">
    <molecule id="Q9NR12-2"/>
    <property type="nucleotide sequence ID" value="NM_203352.3"/>
</dbReference>
<dbReference type="RefSeq" id="NP_998801.1">
    <molecule id="Q9NR12-6"/>
    <property type="nucleotide sequence ID" value="NM_213636.3"/>
</dbReference>
<dbReference type="PDB" id="2Q3G">
    <property type="method" value="X-ray"/>
    <property type="resolution" value="1.11 A"/>
    <property type="chains" value="A/B=1-84"/>
</dbReference>
<dbReference type="PDB" id="7RM8">
    <property type="method" value="NMR"/>
    <property type="chains" value="A=1-84"/>
</dbReference>
<dbReference type="PDBsum" id="2Q3G"/>
<dbReference type="PDBsum" id="7RM8"/>
<dbReference type="SMR" id="Q9NR12"/>
<dbReference type="BioGRID" id="114682">
    <property type="interactions" value="273"/>
</dbReference>
<dbReference type="FunCoup" id="Q9NR12">
    <property type="interactions" value="751"/>
</dbReference>
<dbReference type="IntAct" id="Q9NR12">
    <property type="interactions" value="221"/>
</dbReference>
<dbReference type="MINT" id="Q9NR12"/>
<dbReference type="STRING" id="9606.ENSP00000348099"/>
<dbReference type="GlyConnect" id="2908">
    <molecule id="Q9NR12-4"/>
    <property type="glycosylation" value="1 O-GlcNAc glycan (1 site)"/>
</dbReference>
<dbReference type="GlyCosmos" id="Q9NR12">
    <property type="glycosylation" value="2 sites, 2 glycans"/>
</dbReference>
<dbReference type="GlyGen" id="Q9NR12">
    <property type="glycosylation" value="14 sites, 1 N-linked glycan (1 site), 3 O-linked glycans (12 sites)"/>
</dbReference>
<dbReference type="iPTMnet" id="Q9NR12"/>
<dbReference type="MetOSite" id="Q9NR12"/>
<dbReference type="PhosphoSitePlus" id="Q9NR12"/>
<dbReference type="SwissPalm" id="Q9NR12"/>
<dbReference type="BioMuta" id="PDLIM7"/>
<dbReference type="DMDM" id="74752914"/>
<dbReference type="CPTAC" id="CPTAC-107"/>
<dbReference type="CPTAC" id="CPTAC-108"/>
<dbReference type="jPOST" id="Q9NR12"/>
<dbReference type="MassIVE" id="Q9NR12"/>
<dbReference type="PaxDb" id="9606-ENSP00000348099"/>
<dbReference type="PeptideAtlas" id="Q9NR12"/>
<dbReference type="ProteomicsDB" id="82244">
    <molecule id="Q9NR12-1"/>
</dbReference>
<dbReference type="ProteomicsDB" id="82245">
    <molecule id="Q9NR12-2"/>
</dbReference>
<dbReference type="ProteomicsDB" id="82246">
    <molecule id="Q9NR12-3"/>
</dbReference>
<dbReference type="ProteomicsDB" id="82247">
    <molecule id="Q9NR12-4"/>
</dbReference>
<dbReference type="ProteomicsDB" id="82248">
    <molecule id="Q9NR12-5"/>
</dbReference>
<dbReference type="ProteomicsDB" id="82249">
    <molecule id="Q9NR12-6"/>
</dbReference>
<dbReference type="Pumba" id="Q9NR12"/>
<dbReference type="Antibodypedia" id="17442">
    <property type="antibodies" value="152 antibodies from 25 providers"/>
</dbReference>
<dbReference type="DNASU" id="9260"/>
<dbReference type="Ensembl" id="ENST00000355572.6">
    <molecule id="Q9NR12-6"/>
    <property type="protein sequence ID" value="ENSP00000347776.2"/>
    <property type="gene ID" value="ENSG00000196923.14"/>
</dbReference>
<dbReference type="Ensembl" id="ENST00000355841.7">
    <molecule id="Q9NR12-1"/>
    <property type="protein sequence ID" value="ENSP00000348099.2"/>
    <property type="gene ID" value="ENSG00000196923.14"/>
</dbReference>
<dbReference type="Ensembl" id="ENST00000359895.6">
    <molecule id="Q9NR12-2"/>
    <property type="protein sequence ID" value="ENSP00000352964.2"/>
    <property type="gene ID" value="ENSG00000196923.14"/>
</dbReference>
<dbReference type="Ensembl" id="ENST00000393551.5">
    <molecule id="Q9NR12-4"/>
    <property type="protein sequence ID" value="ENSP00000377182.1"/>
    <property type="gene ID" value="ENSG00000196923.14"/>
</dbReference>
<dbReference type="Ensembl" id="ENST00000486828.6">
    <molecule id="Q9NR12-5"/>
    <property type="protein sequence ID" value="ENSP00000439157.1"/>
    <property type="gene ID" value="ENSG00000196923.14"/>
</dbReference>
<dbReference type="Ensembl" id="ENST00000493815.5">
    <molecule id="Q9NR12-3"/>
    <property type="protein sequence ID" value="ENSP00000431236.1"/>
    <property type="gene ID" value="ENSG00000196923.14"/>
</dbReference>
<dbReference type="GeneID" id="9260"/>
<dbReference type="KEGG" id="hsa:9260"/>
<dbReference type="MANE-Select" id="ENST00000355841.7">
    <property type="protein sequence ID" value="ENSP00000348099.2"/>
    <property type="RefSeq nucleotide sequence ID" value="NM_005451.5"/>
    <property type="RefSeq protein sequence ID" value="NP_005442.2"/>
</dbReference>
<dbReference type="UCSC" id="uc003mhb.3">
    <molecule id="Q9NR12-1"/>
    <property type="organism name" value="human"/>
</dbReference>
<dbReference type="AGR" id="HGNC:22958"/>
<dbReference type="CTD" id="9260"/>
<dbReference type="DisGeNET" id="9260"/>
<dbReference type="GeneCards" id="PDLIM7"/>
<dbReference type="HGNC" id="HGNC:22958">
    <property type="gene designation" value="PDLIM7"/>
</dbReference>
<dbReference type="HPA" id="ENSG00000196923">
    <property type="expression patterns" value="Tissue enhanced (intestine, skeletal muscle)"/>
</dbReference>
<dbReference type="MIM" id="605903">
    <property type="type" value="gene"/>
</dbReference>
<dbReference type="neXtProt" id="NX_Q9NR12"/>
<dbReference type="OpenTargets" id="ENSG00000196923"/>
<dbReference type="PharmGKB" id="PA128394546"/>
<dbReference type="VEuPathDB" id="HostDB:ENSG00000196923"/>
<dbReference type="eggNOG" id="KOG1703">
    <property type="taxonomic scope" value="Eukaryota"/>
</dbReference>
<dbReference type="GeneTree" id="ENSGT00940000159626"/>
<dbReference type="HOGENOM" id="CLU_001357_8_1_1"/>
<dbReference type="InParanoid" id="Q9NR12"/>
<dbReference type="OMA" id="ACSKIIR"/>
<dbReference type="OrthoDB" id="9475968at2759"/>
<dbReference type="PAN-GO" id="Q9NR12">
    <property type="GO annotations" value="9 GO annotations based on evolutionary models"/>
</dbReference>
<dbReference type="PhylomeDB" id="Q9NR12"/>
<dbReference type="TreeFam" id="TF106408"/>
<dbReference type="PathwayCommons" id="Q9NR12"/>
<dbReference type="Reactome" id="R-HSA-8853659">
    <property type="pathway name" value="RET signaling"/>
</dbReference>
<dbReference type="SignaLink" id="Q9NR12"/>
<dbReference type="BioGRID-ORCS" id="9260">
    <property type="hits" value="23 hits in 1149 CRISPR screens"/>
</dbReference>
<dbReference type="CD-CODE" id="91857CE7">
    <property type="entry name" value="Nucleolus"/>
</dbReference>
<dbReference type="ChiTaRS" id="PDLIM7">
    <property type="organism name" value="human"/>
</dbReference>
<dbReference type="EvolutionaryTrace" id="Q9NR12"/>
<dbReference type="GeneWiki" id="PDLIM7"/>
<dbReference type="GenomeRNAi" id="9260"/>
<dbReference type="Pharos" id="Q9NR12">
    <property type="development level" value="Tbio"/>
</dbReference>
<dbReference type="PRO" id="PR:Q9NR12"/>
<dbReference type="Proteomes" id="UP000005640">
    <property type="component" value="Chromosome 5"/>
</dbReference>
<dbReference type="RNAct" id="Q9NR12">
    <property type="molecule type" value="protein"/>
</dbReference>
<dbReference type="Bgee" id="ENSG00000196923">
    <property type="expression patterns" value="Expressed in body of uterus and 159 other cell types or tissues"/>
</dbReference>
<dbReference type="ExpressionAtlas" id="Q9NR12">
    <property type="expression patterns" value="baseline and differential"/>
</dbReference>
<dbReference type="GO" id="GO:0015629">
    <property type="term" value="C:actin cytoskeleton"/>
    <property type="evidence" value="ECO:0000314"/>
    <property type="project" value="HPA"/>
</dbReference>
<dbReference type="GO" id="GO:0005912">
    <property type="term" value="C:adherens junction"/>
    <property type="evidence" value="ECO:0000314"/>
    <property type="project" value="BHF-UCL"/>
</dbReference>
<dbReference type="GO" id="GO:0005829">
    <property type="term" value="C:cytosol"/>
    <property type="evidence" value="ECO:0000304"/>
    <property type="project" value="Reactome"/>
</dbReference>
<dbReference type="GO" id="GO:0031941">
    <property type="term" value="C:filamentous actin"/>
    <property type="evidence" value="ECO:0000318"/>
    <property type="project" value="GO_Central"/>
</dbReference>
<dbReference type="GO" id="GO:0005925">
    <property type="term" value="C:focal adhesion"/>
    <property type="evidence" value="ECO:0000314"/>
    <property type="project" value="HPA"/>
</dbReference>
<dbReference type="GO" id="GO:0005654">
    <property type="term" value="C:nucleoplasm"/>
    <property type="evidence" value="ECO:0000314"/>
    <property type="project" value="HPA"/>
</dbReference>
<dbReference type="GO" id="GO:0001726">
    <property type="term" value="C:ruffle"/>
    <property type="evidence" value="ECO:0007669"/>
    <property type="project" value="Ensembl"/>
</dbReference>
<dbReference type="GO" id="GO:0001725">
    <property type="term" value="C:stress fiber"/>
    <property type="evidence" value="ECO:0000318"/>
    <property type="project" value="GO_Central"/>
</dbReference>
<dbReference type="GO" id="GO:0030018">
    <property type="term" value="C:Z disc"/>
    <property type="evidence" value="ECO:0000318"/>
    <property type="project" value="GO_Central"/>
</dbReference>
<dbReference type="GO" id="GO:0003779">
    <property type="term" value="F:actin binding"/>
    <property type="evidence" value="ECO:0000318"/>
    <property type="project" value="GO_Central"/>
</dbReference>
<dbReference type="GO" id="GO:0046872">
    <property type="term" value="F:metal ion binding"/>
    <property type="evidence" value="ECO:0007669"/>
    <property type="project" value="UniProtKB-KW"/>
</dbReference>
<dbReference type="GO" id="GO:0051371">
    <property type="term" value="F:muscle alpha-actinin binding"/>
    <property type="evidence" value="ECO:0000318"/>
    <property type="project" value="GO_Central"/>
</dbReference>
<dbReference type="GO" id="GO:0030036">
    <property type="term" value="P:actin cytoskeleton organization"/>
    <property type="evidence" value="ECO:0000318"/>
    <property type="project" value="GO_Central"/>
</dbReference>
<dbReference type="GO" id="GO:0030154">
    <property type="term" value="P:cell differentiation"/>
    <property type="evidence" value="ECO:0007669"/>
    <property type="project" value="UniProtKB-KW"/>
</dbReference>
<dbReference type="GO" id="GO:0007507">
    <property type="term" value="P:heart development"/>
    <property type="evidence" value="ECO:0000318"/>
    <property type="project" value="GO_Central"/>
</dbReference>
<dbReference type="GO" id="GO:0061061">
    <property type="term" value="P:muscle structure development"/>
    <property type="evidence" value="ECO:0000318"/>
    <property type="project" value="GO_Central"/>
</dbReference>
<dbReference type="GO" id="GO:0001503">
    <property type="term" value="P:ossification"/>
    <property type="evidence" value="ECO:0007669"/>
    <property type="project" value="UniProtKB-KW"/>
</dbReference>
<dbReference type="GO" id="GO:0006898">
    <property type="term" value="P:receptor-mediated endocytosis"/>
    <property type="evidence" value="ECO:0000304"/>
    <property type="project" value="ProtInc"/>
</dbReference>
<dbReference type="CDD" id="cd09452">
    <property type="entry name" value="LIM1_Enigma"/>
    <property type="match status" value="1"/>
</dbReference>
<dbReference type="CDD" id="cd09456">
    <property type="entry name" value="LIM2_Enigma"/>
    <property type="match status" value="1"/>
</dbReference>
<dbReference type="CDD" id="cd09458">
    <property type="entry name" value="LIM3_Enigma"/>
    <property type="match status" value="1"/>
</dbReference>
<dbReference type="CDD" id="cd06753">
    <property type="entry name" value="PDZ_PDLIM-like"/>
    <property type="match status" value="1"/>
</dbReference>
<dbReference type="FunFam" id="2.30.42.10:FF:000019">
    <property type="entry name" value="LIM domain binding 3 isoform 1"/>
    <property type="match status" value="1"/>
</dbReference>
<dbReference type="FunFam" id="2.10.110.10:FF:000010">
    <property type="entry name" value="PDZ and LIM domain protein 5"/>
    <property type="match status" value="1"/>
</dbReference>
<dbReference type="FunFam" id="2.10.110.10:FF:000014">
    <property type="entry name" value="PDZ and LIM domain protein 5"/>
    <property type="match status" value="1"/>
</dbReference>
<dbReference type="FunFam" id="2.10.110.10:FF:000020">
    <property type="entry name" value="PDZ and LIM domain protein 5"/>
    <property type="match status" value="1"/>
</dbReference>
<dbReference type="Gene3D" id="2.30.42.10">
    <property type="match status" value="1"/>
</dbReference>
<dbReference type="Gene3D" id="2.10.110.10">
    <property type="entry name" value="Cysteine Rich Protein"/>
    <property type="match status" value="3"/>
</dbReference>
<dbReference type="InterPro" id="IPR001478">
    <property type="entry name" value="PDZ"/>
</dbReference>
<dbReference type="InterPro" id="IPR050604">
    <property type="entry name" value="PDZ-LIM_domain"/>
</dbReference>
<dbReference type="InterPro" id="IPR036034">
    <property type="entry name" value="PDZ_sf"/>
</dbReference>
<dbReference type="InterPro" id="IPR001781">
    <property type="entry name" value="Znf_LIM"/>
</dbReference>
<dbReference type="PANTHER" id="PTHR24214:SF0">
    <property type="entry name" value="PDZ AND LIM DOMAIN PROTEIN 7"/>
    <property type="match status" value="1"/>
</dbReference>
<dbReference type="PANTHER" id="PTHR24214">
    <property type="entry name" value="PDZ AND LIM DOMAIN PROTEIN ZASP"/>
    <property type="match status" value="1"/>
</dbReference>
<dbReference type="Pfam" id="PF00412">
    <property type="entry name" value="LIM"/>
    <property type="match status" value="3"/>
</dbReference>
<dbReference type="Pfam" id="PF00595">
    <property type="entry name" value="PDZ"/>
    <property type="match status" value="1"/>
</dbReference>
<dbReference type="SMART" id="SM00132">
    <property type="entry name" value="LIM"/>
    <property type="match status" value="3"/>
</dbReference>
<dbReference type="SMART" id="SM00228">
    <property type="entry name" value="PDZ"/>
    <property type="match status" value="1"/>
</dbReference>
<dbReference type="SUPFAM" id="SSF57716">
    <property type="entry name" value="Glucocorticoid receptor-like (DNA-binding domain)"/>
    <property type="match status" value="4"/>
</dbReference>
<dbReference type="SUPFAM" id="SSF50156">
    <property type="entry name" value="PDZ domain-like"/>
    <property type="match status" value="1"/>
</dbReference>
<dbReference type="PROSITE" id="PS00478">
    <property type="entry name" value="LIM_DOMAIN_1"/>
    <property type="match status" value="2"/>
</dbReference>
<dbReference type="PROSITE" id="PS50023">
    <property type="entry name" value="LIM_DOMAIN_2"/>
    <property type="match status" value="3"/>
</dbReference>
<dbReference type="PROSITE" id="PS50106">
    <property type="entry name" value="PDZ"/>
    <property type="match status" value="1"/>
</dbReference>
<reference key="1">
    <citation type="journal article" date="1994" name="J. Biol. Chem.">
        <title>LIM domain recognition of a tyrosine-containing tight turn.</title>
        <authorList>
            <person name="Wu R.-Y."/>
            <person name="Gill G.N."/>
        </authorList>
    </citation>
    <scope>NUCLEOTIDE SEQUENCE [GENOMIC DNA]</scope>
    <scope>FUNCTION</scope>
    <scope>INTERACTION WITH INSR</scope>
</reference>
<reference key="2">
    <citation type="journal article" date="2002" name="J. Bone Miner. Res.">
        <title>Overexpressed LIM mineralization proteins do not require LIM domains to induce bone.</title>
        <authorList>
            <person name="Liu Y."/>
            <person name="Hair G.A."/>
            <person name="Boden S.D."/>
            <person name="Viggeswarapu M."/>
            <person name="Titus L."/>
        </authorList>
    </citation>
    <scope>NUCLEOTIDE SEQUENCE [MRNA] (ISOFORMS 1; 2 AND 3)</scope>
    <scope>FUNCTION</scope>
    <scope>TISSUE SPECIFICITY</scope>
    <scope>ALTERNATIVE SPLICING</scope>
    <source>
        <tissue>Heart</tissue>
    </source>
</reference>
<reference key="3">
    <citation type="submission" date="2000-05" db="EMBL/GenBank/DDBJ databases">
        <title>Enigma sequence and interaction with Ret.</title>
        <authorList>
            <person name="Borrello M.G."/>
            <person name="Billaud M."/>
            <person name="Mercalli E."/>
            <person name="Ghizzoni S."/>
            <person name="Bidaud C."/>
        </authorList>
    </citation>
    <scope>NUCLEOTIDE SEQUENCE [MRNA] (ISOFORM 1)</scope>
    <source>
        <tissue>Neuroepithelium</tissue>
    </source>
</reference>
<reference key="4">
    <citation type="journal article" date="2004" name="Genome Res.">
        <title>The status, quality, and expansion of the NIH full-length cDNA project: the Mammalian Gene Collection (MGC).</title>
        <authorList>
            <consortium name="The MGC Project Team"/>
        </authorList>
    </citation>
    <scope>NUCLEOTIDE SEQUENCE [LARGE SCALE MRNA] (ISOFORMS 1; 4; 5 AND 6)</scope>
    <source>
        <tissue>Brain</tissue>
        <tissue>Kidney</tissue>
        <tissue>Mammary gland</tissue>
        <tissue>Uterus</tissue>
    </source>
</reference>
<reference key="5">
    <citation type="submission" date="2005-11" db="UniProtKB">
        <authorList>
            <person name="Bienvenut W.V."/>
            <person name="Claeys D."/>
        </authorList>
    </citation>
    <scope>PROTEIN SEQUENCE OF 6-17; 94-103 AND 246-258</scope>
    <scope>IDENTIFICATION BY MASS SPECTROMETRY</scope>
    <source>
        <tissue>Platelet</tissue>
    </source>
</reference>
<reference key="6">
    <citation type="journal article" date="1996" name="J. Biol. Chem.">
        <title>Protein-protein interaction of zinc finger LIM domains with protein kinase C.</title>
        <authorList>
            <person name="Kuroda S."/>
            <person name="Tokunaga C."/>
            <person name="Kiyohara Y."/>
            <person name="Higuchi O."/>
            <person name="Konishi H."/>
            <person name="Mizuno K."/>
            <person name="Gill G.N."/>
            <person name="Kikkawa U."/>
        </authorList>
    </citation>
    <scope>INTERACTION WITH PKC</scope>
</reference>
<reference key="7">
    <citation type="journal article" date="1998" name="Mol. Cell. Biol.">
        <title>Shc and Enigma are both required for mitogenic signaling by Ret/ptc2.</title>
        <authorList>
            <person name="Durick K."/>
            <person name="Gill G.N."/>
            <person name="Taylor S.S."/>
        </authorList>
    </citation>
    <scope>SUBCELLULAR LOCATION</scope>
    <scope>INTERACTION WITH RET AND SHC1</scope>
</reference>
<reference key="8">
    <citation type="journal article" date="1999" name="Mol. Biol. Cell">
        <title>The PDZ domain of the LIM protein enigma binds to beta-tropomyosin.</title>
        <authorList>
            <person name="Guy P.M."/>
            <person name="Kenny D.A."/>
            <person name="Gill G.N."/>
        </authorList>
    </citation>
    <scope>INTERACTION WITH TPM2</scope>
    <scope>MUTAGENESIS OF 15-GLY-PHE-16 AND HIS-63</scope>
</reference>
<reference key="9">
    <citation type="journal article" date="2008" name="Proc. Natl. Acad. Sci. U.S.A.">
        <title>A quantitative atlas of mitotic phosphorylation.</title>
        <authorList>
            <person name="Dephoure N."/>
            <person name="Zhou C."/>
            <person name="Villen J."/>
            <person name="Beausoleil S.A."/>
            <person name="Bakalarski C.E."/>
            <person name="Elledge S.J."/>
            <person name="Gygi S.P."/>
        </authorList>
    </citation>
    <scope>PHOSPHORYLATION [LARGE SCALE ANALYSIS] AT SER-247</scope>
    <scope>IDENTIFICATION BY MASS SPECTROMETRY [LARGE SCALE ANALYSIS]</scope>
    <source>
        <tissue>Cervix carcinoma</tissue>
    </source>
</reference>
<reference key="10">
    <citation type="journal article" date="2010" name="Sci. Signal.">
        <title>Quantitative phosphoproteomics reveals widespread full phosphorylation site occupancy during mitosis.</title>
        <authorList>
            <person name="Olsen J.V."/>
            <person name="Vermeulen M."/>
            <person name="Santamaria A."/>
            <person name="Kumar C."/>
            <person name="Miller M.L."/>
            <person name="Jensen L.J."/>
            <person name="Gnad F."/>
            <person name="Cox J."/>
            <person name="Jensen T.S."/>
            <person name="Nigg E.A."/>
            <person name="Brunak S."/>
            <person name="Mann M."/>
        </authorList>
    </citation>
    <scope>IDENTIFICATION BY MASS SPECTROMETRY [LARGE SCALE ANALYSIS]</scope>
    <source>
        <tissue>Cervix carcinoma</tissue>
    </source>
</reference>
<reference key="11">
    <citation type="journal article" date="2011" name="BMC Syst. Biol.">
        <title>Initial characterization of the human central proteome.</title>
        <authorList>
            <person name="Burkard T.R."/>
            <person name="Planyavsky M."/>
            <person name="Kaupe I."/>
            <person name="Breitwieser F.P."/>
            <person name="Buerckstuemmer T."/>
            <person name="Bennett K.L."/>
            <person name="Superti-Furga G."/>
            <person name="Colinge J."/>
        </authorList>
    </citation>
    <scope>IDENTIFICATION BY MASS SPECTROMETRY [LARGE SCALE ANALYSIS]</scope>
</reference>
<reference key="12">
    <citation type="journal article" date="2012" name="Proc. Natl. Acad. Sci. U.S.A.">
        <title>N-terminal acetylome analyses and functional insights of the N-terminal acetyltransferase NatB.</title>
        <authorList>
            <person name="Van Damme P."/>
            <person name="Lasa M."/>
            <person name="Polevoda B."/>
            <person name="Gazquez C."/>
            <person name="Elosegui-Artola A."/>
            <person name="Kim D.S."/>
            <person name="De Juan-Pardo E."/>
            <person name="Demeyer K."/>
            <person name="Hole K."/>
            <person name="Larrea E."/>
            <person name="Timmerman E."/>
            <person name="Prieto J."/>
            <person name="Arnesen T."/>
            <person name="Sherman F."/>
            <person name="Gevaert K."/>
            <person name="Aldabe R."/>
        </authorList>
    </citation>
    <scope>IDENTIFICATION BY MASS SPECTROMETRY [LARGE SCALE ANALYSIS]</scope>
</reference>
<reference key="13">
    <citation type="journal article" date="2013" name="J. Proteome Res.">
        <title>Toward a comprehensive characterization of a human cancer cell phosphoproteome.</title>
        <authorList>
            <person name="Zhou H."/>
            <person name="Di Palma S."/>
            <person name="Preisinger C."/>
            <person name="Peng M."/>
            <person name="Polat A.N."/>
            <person name="Heck A.J."/>
            <person name="Mohammed S."/>
        </authorList>
    </citation>
    <scope>PHOSPHORYLATION [LARGE SCALE ANALYSIS] AT SER-78 AND SER-111</scope>
    <scope>IDENTIFICATION BY MASS SPECTROMETRY [LARGE SCALE ANALYSIS]</scope>
    <source>
        <tissue>Cervix carcinoma</tissue>
        <tissue>Erythroleukemia</tissue>
    </source>
</reference>
<reference key="14">
    <citation type="journal article" date="2014" name="J. Proteomics">
        <title>An enzyme assisted RP-RPLC approach for in-depth analysis of human liver phosphoproteome.</title>
        <authorList>
            <person name="Bian Y."/>
            <person name="Song C."/>
            <person name="Cheng K."/>
            <person name="Dong M."/>
            <person name="Wang F."/>
            <person name="Huang J."/>
            <person name="Sun D."/>
            <person name="Wang L."/>
            <person name="Ye M."/>
            <person name="Zou H."/>
        </authorList>
    </citation>
    <scope>IDENTIFICATION BY MASS SPECTROMETRY [LARGE SCALE ANALYSIS]</scope>
    <source>
        <tissue>Liver</tissue>
    </source>
</reference>
<reference key="15">
    <citation type="journal article" date="2014" name="Mol. Cell. Proteomics">
        <title>Immunoaffinity enrichment and mass spectrometry analysis of protein methylation.</title>
        <authorList>
            <person name="Guo A."/>
            <person name="Gu H."/>
            <person name="Zhou J."/>
            <person name="Mulhern D."/>
            <person name="Wang Y."/>
            <person name="Lee K.A."/>
            <person name="Yang V."/>
            <person name="Aguiar M."/>
            <person name="Kornhauser J."/>
            <person name="Jia X."/>
            <person name="Ren J."/>
            <person name="Beausoleil S.A."/>
            <person name="Silva J.C."/>
            <person name="Vemulapalli V."/>
            <person name="Bedford M.T."/>
            <person name="Comb M.J."/>
        </authorList>
    </citation>
    <scope>METHYLATION [LARGE SCALE ANALYSIS] AT ARG-103</scope>
    <scope>IDENTIFICATION BY MASS SPECTROMETRY [LARGE SCALE ANALYSIS]</scope>
    <source>
        <tissue>Colon carcinoma</tissue>
    </source>
</reference>
<reference key="16">
    <citation type="submission" date="2009-02" db="PDB data bank">
        <title>Structure of the PDZ domain of human PDLIM7 bound to a C-terminal extension from human beta-tropomyosin.</title>
        <authorList>
            <consortium name="Structural genomics consortium (SGC)"/>
        </authorList>
    </citation>
    <scope>X-RAY CRYSTALLOGRAPHY (1.11 ANGSTROMS) OF 1-84</scope>
</reference>
<reference key="17">
    <citation type="journal article" date="2006" name="Science">
        <title>The consensus coding sequences of human breast and colorectal cancers.</title>
        <authorList>
            <person name="Sjoeblom T."/>
            <person name="Jones S."/>
            <person name="Wood L.D."/>
            <person name="Parsons D.W."/>
            <person name="Lin J."/>
            <person name="Barber T.D."/>
            <person name="Mandelker D."/>
            <person name="Leary R.J."/>
            <person name="Ptak J."/>
            <person name="Silliman N."/>
            <person name="Szabo S."/>
            <person name="Buckhaults P."/>
            <person name="Farrell C."/>
            <person name="Meeh P."/>
            <person name="Markowitz S.D."/>
            <person name="Willis J."/>
            <person name="Dawson D."/>
            <person name="Willson J.K.V."/>
            <person name="Gazdar A.F."/>
            <person name="Hartigan J."/>
            <person name="Wu L."/>
            <person name="Liu C."/>
            <person name="Parmigiani G."/>
            <person name="Park B.H."/>
            <person name="Bachman K.E."/>
            <person name="Papadopoulos N."/>
            <person name="Vogelstein B."/>
            <person name="Kinzler K.W."/>
            <person name="Velculescu V.E."/>
        </authorList>
    </citation>
    <scope>VARIANT [LARGE SCALE ANALYSIS] ASN-450</scope>
</reference>
<name>PDLI7_HUMAN</name>
<protein>
    <recommendedName>
        <fullName>PDZ and LIM domain protein 7</fullName>
    </recommendedName>
    <alternativeName>
        <fullName>LIM mineralization protein</fullName>
        <shortName>LMP</shortName>
    </alternativeName>
    <alternativeName>
        <fullName>Protein enigma</fullName>
    </alternativeName>
</protein>
<proteinExistence type="evidence at protein level"/>
<organism>
    <name type="scientific">Homo sapiens</name>
    <name type="common">Human</name>
    <dbReference type="NCBI Taxonomy" id="9606"/>
    <lineage>
        <taxon>Eukaryota</taxon>
        <taxon>Metazoa</taxon>
        <taxon>Chordata</taxon>
        <taxon>Craniata</taxon>
        <taxon>Vertebrata</taxon>
        <taxon>Euteleostomi</taxon>
        <taxon>Mammalia</taxon>
        <taxon>Eutheria</taxon>
        <taxon>Euarchontoglires</taxon>
        <taxon>Primates</taxon>
        <taxon>Haplorrhini</taxon>
        <taxon>Catarrhini</taxon>
        <taxon>Hominidae</taxon>
        <taxon>Homo</taxon>
    </lineage>
</organism>
<accession>Q9NR12</accession>
<accession>Q14250</accession>
<accession>Q5XG82</accession>
<accession>Q6NVZ5</accession>
<accession>Q96C91</accession>
<accession>Q9BXB8</accession>
<accession>Q9BXB9</accession>
<gene>
    <name type="primary">PDLIM7</name>
    <name type="synonym">ENIGMA</name>
</gene>